<comment type="function">
    <text evidence="3">Implements its pathogenic function during infection.</text>
</comment>
<comment type="subunit">
    <text evidence="1">Forms both homodimers and heterodimers with EsxA. Homodimerization is calcium-dependent.</text>
</comment>
<comment type="subcellular location">
    <subcellularLocation>
        <location evidence="2">Secreted</location>
    </subcellularLocation>
    <text evidence="2">Secreted via the ESAT-6 secretion system (Ess) / type VII secretion system (T7SS).</text>
</comment>
<comment type="similarity">
    <text evidence="5">Belongs to the EsxC family.</text>
</comment>
<proteinExistence type="inferred from homology"/>
<dbReference type="EMBL" id="BA000033">
    <property type="protein sequence ID" value="BAB94129.1"/>
    <property type="molecule type" value="Genomic_DNA"/>
</dbReference>
<dbReference type="RefSeq" id="WP_001010291.1">
    <property type="nucleotide sequence ID" value="NC_003923.1"/>
</dbReference>
<dbReference type="SMR" id="Q8NYF2"/>
<dbReference type="KEGG" id="sam:MW0264"/>
<dbReference type="HOGENOM" id="CLU_1936813_0_0_9"/>
<dbReference type="GO" id="GO:0005576">
    <property type="term" value="C:extracellular region"/>
    <property type="evidence" value="ECO:0007669"/>
    <property type="project" value="UniProtKB-SubCell"/>
</dbReference>
<evidence type="ECO:0000250" key="1">
    <source>
        <dbReference type="UniProtKB" id="A0A0H2XIK2"/>
    </source>
</evidence>
<evidence type="ECO:0000250" key="2">
    <source>
        <dbReference type="UniProtKB" id="P0C051"/>
    </source>
</evidence>
<evidence type="ECO:0000269" key="3">
    <source>
    </source>
</evidence>
<evidence type="ECO:0000303" key="4">
    <source>
    </source>
</evidence>
<evidence type="ECO:0000305" key="5"/>
<protein>
    <recommendedName>
        <fullName evidence="2">Type VII secretion system extracellular protein C</fullName>
        <shortName evidence="2">Ess extracellular protein C</shortName>
    </recommendedName>
</protein>
<feature type="chain" id="PRO_0000087055" description="Type VII secretion system extracellular protein C">
    <location>
        <begin position="1"/>
        <end position="130"/>
    </location>
</feature>
<gene>
    <name evidence="1" type="primary">esxC</name>
    <name evidence="4" type="synonym">esaC</name>
    <name type="ordered locus">MW0264</name>
</gene>
<organism>
    <name type="scientific">Staphylococcus aureus (strain MW2)</name>
    <dbReference type="NCBI Taxonomy" id="196620"/>
    <lineage>
        <taxon>Bacteria</taxon>
        <taxon>Bacillati</taxon>
        <taxon>Bacillota</taxon>
        <taxon>Bacilli</taxon>
        <taxon>Bacillales</taxon>
        <taxon>Staphylococcaceae</taxon>
        <taxon>Staphylococcus</taxon>
    </lineage>
</organism>
<accession>Q8NYF2</accession>
<sequence>MNFNDIETMVKSKFKDIKKHAEEIAHEIEVRSGYLRKAEQYKRLEFNLSFALDDIESTAKDVQTAKTSANKDSVTVKGKAPNTLYIEKRNLMKQKLEMLGEDIDKNKESLQKAKEIAGEKASEYFNKAMN</sequence>
<reference key="1">
    <citation type="journal article" date="2002" name="Lancet">
        <title>Genome and virulence determinants of high virulence community-acquired MRSA.</title>
        <authorList>
            <person name="Baba T."/>
            <person name="Takeuchi F."/>
            <person name="Kuroda M."/>
            <person name="Yuzawa H."/>
            <person name="Aoki K."/>
            <person name="Oguchi A."/>
            <person name="Nagai Y."/>
            <person name="Iwama N."/>
            <person name="Asano K."/>
            <person name="Naimi T."/>
            <person name="Kuroda H."/>
            <person name="Cui L."/>
            <person name="Yamamoto K."/>
            <person name="Hiramatsu K."/>
        </authorList>
    </citation>
    <scope>NUCLEOTIDE SEQUENCE [LARGE SCALE GENOMIC DNA]</scope>
    <source>
        <strain>MW2</strain>
    </source>
</reference>
<reference key="2">
    <citation type="journal article" date="2008" name="Mol. Microbiol.">
        <title>EsaC substrate for the ESAT-6 secretion pathway and its role in persistent infections of Staphylococcus aureus.</title>
        <authorList>
            <person name="Burts M.L."/>
            <person name="DeDent A.C."/>
            <person name="Missiakas D.M."/>
        </authorList>
    </citation>
    <scope>FUNCTION</scope>
</reference>
<keyword id="KW-0964">Secreted</keyword>
<keyword id="KW-0843">Virulence</keyword>
<name>ESXC_STAAW</name>